<reference key="1">
    <citation type="journal article" date="2012" name="Stand. Genomic Sci.">
        <title>Complete genome sequence of the facultatively chemolithoautotrophic and methylotrophic alpha Proteobacterium Starkeya novella type strain (ATCC 8093(T)).</title>
        <authorList>
            <person name="Kappler U."/>
            <person name="Davenport K."/>
            <person name="Beatson S."/>
            <person name="Lucas S."/>
            <person name="Lapidus A."/>
            <person name="Copeland A."/>
            <person name="Berry K.W."/>
            <person name="Glavina Del Rio T."/>
            <person name="Hammon N."/>
            <person name="Dalin E."/>
            <person name="Tice H."/>
            <person name="Pitluck S."/>
            <person name="Richardson P."/>
            <person name="Bruce D."/>
            <person name="Goodwin L.A."/>
            <person name="Han C."/>
            <person name="Tapia R."/>
            <person name="Detter J.C."/>
            <person name="Chang Y.J."/>
            <person name="Jeffries C.D."/>
            <person name="Land M."/>
            <person name="Hauser L."/>
            <person name="Kyrpides N.C."/>
            <person name="Goker M."/>
            <person name="Ivanova N."/>
            <person name="Klenk H.P."/>
            <person name="Woyke T."/>
        </authorList>
    </citation>
    <scope>NUCLEOTIDE SEQUENCE [LARGE SCALE GENOMIC DNA]</scope>
    <source>
        <strain>ATCC 8093 / DSM 506 / JCM 20403 / CCM 1077 / IAM 12100 / NBRC 12443 / NCIMB 10456</strain>
    </source>
</reference>
<reference key="2">
    <citation type="journal article" date="2015" name="J. Am. Chem. Soc.">
        <title>A unique cis-3-hydroxy-L-proline dehydratase in the enolase superfamily.</title>
        <authorList>
            <person name="Zhang X."/>
            <person name="Kumar R."/>
            <person name="Vetting M.W."/>
            <person name="Zhao S."/>
            <person name="Jacobson M.P."/>
            <person name="Almo S.C."/>
            <person name="Gerlt J.A."/>
        </authorList>
    </citation>
    <scope>FUNCTION</scope>
    <scope>CATALYTIC ACTIVITY</scope>
    <source>
        <strain>ATCC 8093 / DSM 506 / JCM 20403 / CCM 1077 / IAM 12100 / NBRC 12443 / NCIMB 10456</strain>
    </source>
</reference>
<feature type="chain" id="PRO_0000433401" description="Trans-3-hydroxy-L-proline dehydratase">
    <location>
        <begin position="1"/>
        <end position="345"/>
    </location>
</feature>
<feature type="active site" description="Proton acceptor" evidence="1">
    <location>
        <position position="90"/>
    </location>
</feature>
<feature type="binding site" evidence="1">
    <location>
        <begin position="91"/>
        <end position="92"/>
    </location>
    <ligand>
        <name>substrate</name>
    </ligand>
</feature>
<feature type="binding site" evidence="1">
    <location>
        <position position="252"/>
    </location>
    <ligand>
        <name>substrate</name>
    </ligand>
</feature>
<feature type="binding site" evidence="1">
    <location>
        <begin position="257"/>
        <end position="258"/>
    </location>
    <ligand>
        <name>substrate</name>
    </ligand>
</feature>
<sequence length="345" mass="37028">MRSSKVIHVVGCHAEGEVGDVIVGGVAPPPGETVWAQSRFVASDNTLRNFVLQEPRGGVFRHVNLLVPPKNKEAVAAWIIMEPEDTPPMSGSNSICVSTVLLDTGIVPMVEPETHMVLEAPGGLIEATAYCKNGKAERIRVKNHPSFADKLDAKLELEGYGTLTVDTAYGGDSFCIVDAHALGFSIKPDEAKDFADLGMKIVKAANQQLGFQHPTNKDWSHISFCQFAAPLTDDNGTPSGANAVAIRPGKIDRSPCGTGCSARMAVLHAKGILKVGDAFVGRSIIGSRFDCRVEAETSIGGRPAIVPSIMGRAFITHTAQLMVDPDDPWQTGYRLSDTWPVWKQD</sequence>
<gene>
    <name evidence="5" type="ordered locus">Snov_0155</name>
</gene>
<protein>
    <recommendedName>
        <fullName evidence="3">Trans-3-hydroxy-L-proline dehydratase</fullName>
        <shortName evidence="3">T3LHyp dehydratase</shortName>
        <shortName evidence="3">t3HypD</shortName>
        <ecNumber evidence="2">4.2.1.77</ecNumber>
    </recommendedName>
</protein>
<accession>D7A0Y1</accession>
<proteinExistence type="evidence at protein level"/>
<organism>
    <name type="scientific">Ancylobacter novellus (strain ATCC 8093 / DSM 506 / JCM 20403 / CCM 1077 / IAM 12100 / NBRC 12443 / NCIMB 10456)</name>
    <name type="common">Starkeya novella</name>
    <dbReference type="NCBI Taxonomy" id="639283"/>
    <lineage>
        <taxon>Bacteria</taxon>
        <taxon>Pseudomonadati</taxon>
        <taxon>Pseudomonadota</taxon>
        <taxon>Alphaproteobacteria</taxon>
        <taxon>Hyphomicrobiales</taxon>
        <taxon>Xanthobacteraceae</taxon>
        <taxon>Ancylobacter</taxon>
    </lineage>
</organism>
<name>T3HPD_ANCN5</name>
<comment type="function">
    <text evidence="2">Catalyzes the dehydration of trans-3-hydroxy-L-proline (t3LHyp) to Delta(1)-pyrroline-2-carboxylate (Pyr2C). May be involved in a degradation pathway that converts t3LHyp to L-proline, which would allow S.novella to grow on t3LHyp as a sole carbon source.</text>
</comment>
<comment type="catalytic activity">
    <reaction evidence="2">
        <text>trans-3-hydroxy-L-proline = 1-pyrroline-2-carboxylate + H2O</text>
        <dbReference type="Rhea" id="RHEA:10320"/>
        <dbReference type="ChEBI" id="CHEBI:15377"/>
        <dbReference type="ChEBI" id="CHEBI:39785"/>
        <dbReference type="ChEBI" id="CHEBI:57938"/>
        <dbReference type="EC" id="4.2.1.77"/>
    </reaction>
</comment>
<comment type="similarity">
    <text evidence="4">Belongs to the proline racemase family.</text>
</comment>
<keyword id="KW-0413">Isomerase</keyword>
<keyword id="KW-0456">Lyase</keyword>
<evidence type="ECO:0000250" key="1">
    <source>
        <dbReference type="UniProtKB" id="B9K4G4"/>
    </source>
</evidence>
<evidence type="ECO:0000269" key="2">
    <source>
    </source>
</evidence>
<evidence type="ECO:0000303" key="3">
    <source>
    </source>
</evidence>
<evidence type="ECO:0000305" key="4"/>
<evidence type="ECO:0000312" key="5">
    <source>
        <dbReference type="EMBL" id="ADH87491.1"/>
    </source>
</evidence>
<dbReference type="EC" id="4.2.1.77" evidence="2"/>
<dbReference type="EMBL" id="CP002026">
    <property type="protein sequence ID" value="ADH87491.1"/>
    <property type="molecule type" value="Genomic_DNA"/>
</dbReference>
<dbReference type="RefSeq" id="WP_013164996.1">
    <property type="nucleotide sequence ID" value="NC_014217.1"/>
</dbReference>
<dbReference type="SMR" id="D7A0Y1"/>
<dbReference type="STRING" id="639283.Snov_0155"/>
<dbReference type="KEGG" id="sno:Snov_0155"/>
<dbReference type="eggNOG" id="COG3938">
    <property type="taxonomic scope" value="Bacteria"/>
</dbReference>
<dbReference type="HOGENOM" id="CLU_036729_2_0_5"/>
<dbReference type="OrthoDB" id="181267at2"/>
<dbReference type="Proteomes" id="UP000006633">
    <property type="component" value="Chromosome"/>
</dbReference>
<dbReference type="GO" id="GO:0047580">
    <property type="term" value="F:4-hydroxyproline epimerase activity"/>
    <property type="evidence" value="ECO:0007669"/>
    <property type="project" value="TreeGrafter"/>
</dbReference>
<dbReference type="GO" id="GO:0050346">
    <property type="term" value="F:trans-L-3-hydroxyproline dehydratase activity"/>
    <property type="evidence" value="ECO:0007669"/>
    <property type="project" value="UniProtKB-EC"/>
</dbReference>
<dbReference type="FunFam" id="3.10.310.10:FF:000005">
    <property type="entry name" value="Proline racemase"/>
    <property type="match status" value="1"/>
</dbReference>
<dbReference type="Gene3D" id="3.10.310.10">
    <property type="entry name" value="Diaminopimelate Epimerase, Chain A, domain 1"/>
    <property type="match status" value="2"/>
</dbReference>
<dbReference type="InterPro" id="IPR008794">
    <property type="entry name" value="Pro_racemase_fam"/>
</dbReference>
<dbReference type="NCBIfam" id="NF047722">
    <property type="entry name" value="T3LHypDht"/>
    <property type="match status" value="1"/>
</dbReference>
<dbReference type="PANTHER" id="PTHR33442:SF5">
    <property type="entry name" value="BIFUNCTIONAL TRANS-3-HYDROXY-L-PROLINE DEHYDRATASE_2-EPIMERASE"/>
    <property type="match status" value="1"/>
</dbReference>
<dbReference type="PANTHER" id="PTHR33442">
    <property type="entry name" value="TRANS-3-HYDROXY-L-PROLINE DEHYDRATASE"/>
    <property type="match status" value="1"/>
</dbReference>
<dbReference type="Pfam" id="PF05544">
    <property type="entry name" value="Pro_racemase"/>
    <property type="match status" value="1"/>
</dbReference>
<dbReference type="PIRSF" id="PIRSF029792">
    <property type="entry name" value="Pro_racemase"/>
    <property type="match status" value="1"/>
</dbReference>
<dbReference type="SFLD" id="SFLDS00028">
    <property type="entry name" value="Proline_Racemase"/>
    <property type="match status" value="1"/>
</dbReference>
<dbReference type="SUPFAM" id="SSF54506">
    <property type="entry name" value="Diaminopimelate epimerase-like"/>
    <property type="match status" value="1"/>
</dbReference>